<evidence type="ECO:0000255" key="1">
    <source>
        <dbReference type="HAMAP-Rule" id="MF_00051"/>
    </source>
</evidence>
<keyword id="KW-0007">Acetylation</keyword>
<keyword id="KW-0028">Amino-acid biosynthesis</keyword>
<keyword id="KW-0963">Cytoplasm</keyword>
<keyword id="KW-0554">One-carbon metabolism</keyword>
<keyword id="KW-0663">Pyridoxal phosphate</keyword>
<keyword id="KW-1185">Reference proteome</keyword>
<keyword id="KW-0808">Transferase</keyword>
<comment type="function">
    <text evidence="1">Catalyzes the reversible interconversion of serine and glycine with tetrahydrofolate (THF) serving as the one-carbon carrier. This reaction serves as the major source of one-carbon groups required for the biosynthesis of purines, thymidylate, methionine, and other important biomolecules. Also exhibits THF-independent aldolase activity toward beta-hydroxyamino acids, producing glycine and aldehydes, via a retro-aldol mechanism.</text>
</comment>
<comment type="catalytic activity">
    <reaction evidence="1">
        <text>(6R)-5,10-methylene-5,6,7,8-tetrahydrofolate + glycine + H2O = (6S)-5,6,7,8-tetrahydrofolate + L-serine</text>
        <dbReference type="Rhea" id="RHEA:15481"/>
        <dbReference type="ChEBI" id="CHEBI:15377"/>
        <dbReference type="ChEBI" id="CHEBI:15636"/>
        <dbReference type="ChEBI" id="CHEBI:33384"/>
        <dbReference type="ChEBI" id="CHEBI:57305"/>
        <dbReference type="ChEBI" id="CHEBI:57453"/>
        <dbReference type="EC" id="2.1.2.1"/>
    </reaction>
</comment>
<comment type="cofactor">
    <cofactor evidence="1">
        <name>pyridoxal 5'-phosphate</name>
        <dbReference type="ChEBI" id="CHEBI:597326"/>
    </cofactor>
</comment>
<comment type="pathway">
    <text evidence="1">One-carbon metabolism; tetrahydrofolate interconversion.</text>
</comment>
<comment type="pathway">
    <text evidence="1">Amino-acid biosynthesis; glycine biosynthesis; glycine from L-serine: step 1/1.</text>
</comment>
<comment type="subunit">
    <text evidence="1">Homodimer.</text>
</comment>
<comment type="subcellular location">
    <subcellularLocation>
        <location evidence="1">Cytoplasm</location>
    </subcellularLocation>
</comment>
<comment type="similarity">
    <text evidence="1">Belongs to the SHMT family.</text>
</comment>
<name>GLYA_SHIB3</name>
<organism>
    <name type="scientific">Shigella boydii serotype 18 (strain CDC 3083-94 / BS512)</name>
    <dbReference type="NCBI Taxonomy" id="344609"/>
    <lineage>
        <taxon>Bacteria</taxon>
        <taxon>Pseudomonadati</taxon>
        <taxon>Pseudomonadota</taxon>
        <taxon>Gammaproteobacteria</taxon>
        <taxon>Enterobacterales</taxon>
        <taxon>Enterobacteriaceae</taxon>
        <taxon>Shigella</taxon>
    </lineage>
</organism>
<gene>
    <name evidence="1" type="primary">glyA</name>
    <name type="ordered locus">SbBS512_E2916</name>
</gene>
<reference key="1">
    <citation type="submission" date="2008-05" db="EMBL/GenBank/DDBJ databases">
        <title>Complete sequence of Shigella boydii serotype 18 strain BS512.</title>
        <authorList>
            <person name="Rasko D.A."/>
            <person name="Rosovitz M."/>
            <person name="Maurelli A.T."/>
            <person name="Myers G."/>
            <person name="Seshadri R."/>
            <person name="Cer R."/>
            <person name="Jiang L."/>
            <person name="Ravel J."/>
            <person name="Sebastian Y."/>
        </authorList>
    </citation>
    <scope>NUCLEOTIDE SEQUENCE [LARGE SCALE GENOMIC DNA]</scope>
    <source>
        <strain>CDC 3083-94 / BS512</strain>
    </source>
</reference>
<proteinExistence type="inferred from homology"/>
<dbReference type="EC" id="2.1.2.1" evidence="1"/>
<dbReference type="EMBL" id="CP001063">
    <property type="protein sequence ID" value="ACD10281.1"/>
    <property type="molecule type" value="Genomic_DNA"/>
</dbReference>
<dbReference type="RefSeq" id="WP_000919159.1">
    <property type="nucleotide sequence ID" value="NC_010658.1"/>
</dbReference>
<dbReference type="SMR" id="B2TXW4"/>
<dbReference type="STRING" id="344609.SbBS512_E2916"/>
<dbReference type="GeneID" id="89517346"/>
<dbReference type="KEGG" id="sbc:SbBS512_E2916"/>
<dbReference type="HOGENOM" id="CLU_022477_2_1_6"/>
<dbReference type="UniPathway" id="UPA00193"/>
<dbReference type="UniPathway" id="UPA00288">
    <property type="reaction ID" value="UER01023"/>
</dbReference>
<dbReference type="Proteomes" id="UP000001030">
    <property type="component" value="Chromosome"/>
</dbReference>
<dbReference type="GO" id="GO:0005829">
    <property type="term" value="C:cytosol"/>
    <property type="evidence" value="ECO:0007669"/>
    <property type="project" value="TreeGrafter"/>
</dbReference>
<dbReference type="GO" id="GO:0004372">
    <property type="term" value="F:glycine hydroxymethyltransferase activity"/>
    <property type="evidence" value="ECO:0007669"/>
    <property type="project" value="UniProtKB-UniRule"/>
</dbReference>
<dbReference type="GO" id="GO:0030170">
    <property type="term" value="F:pyridoxal phosphate binding"/>
    <property type="evidence" value="ECO:0007669"/>
    <property type="project" value="UniProtKB-UniRule"/>
</dbReference>
<dbReference type="GO" id="GO:0019264">
    <property type="term" value="P:glycine biosynthetic process from serine"/>
    <property type="evidence" value="ECO:0007669"/>
    <property type="project" value="UniProtKB-UniRule"/>
</dbReference>
<dbReference type="GO" id="GO:0035999">
    <property type="term" value="P:tetrahydrofolate interconversion"/>
    <property type="evidence" value="ECO:0007669"/>
    <property type="project" value="UniProtKB-UniRule"/>
</dbReference>
<dbReference type="CDD" id="cd00378">
    <property type="entry name" value="SHMT"/>
    <property type="match status" value="1"/>
</dbReference>
<dbReference type="FunFam" id="3.40.640.10:FF:000001">
    <property type="entry name" value="Serine hydroxymethyltransferase"/>
    <property type="match status" value="1"/>
</dbReference>
<dbReference type="FunFam" id="3.90.1150.10:FF:000003">
    <property type="entry name" value="Serine hydroxymethyltransferase"/>
    <property type="match status" value="1"/>
</dbReference>
<dbReference type="Gene3D" id="3.90.1150.10">
    <property type="entry name" value="Aspartate Aminotransferase, domain 1"/>
    <property type="match status" value="1"/>
</dbReference>
<dbReference type="Gene3D" id="3.40.640.10">
    <property type="entry name" value="Type I PLP-dependent aspartate aminotransferase-like (Major domain)"/>
    <property type="match status" value="1"/>
</dbReference>
<dbReference type="HAMAP" id="MF_00051">
    <property type="entry name" value="SHMT"/>
    <property type="match status" value="1"/>
</dbReference>
<dbReference type="InterPro" id="IPR015424">
    <property type="entry name" value="PyrdxlP-dep_Trfase"/>
</dbReference>
<dbReference type="InterPro" id="IPR015421">
    <property type="entry name" value="PyrdxlP-dep_Trfase_major"/>
</dbReference>
<dbReference type="InterPro" id="IPR015422">
    <property type="entry name" value="PyrdxlP-dep_Trfase_small"/>
</dbReference>
<dbReference type="InterPro" id="IPR001085">
    <property type="entry name" value="Ser_HO-MeTrfase"/>
</dbReference>
<dbReference type="InterPro" id="IPR049943">
    <property type="entry name" value="Ser_HO-MeTrfase-like"/>
</dbReference>
<dbReference type="InterPro" id="IPR019798">
    <property type="entry name" value="Ser_HO-MeTrfase_PLP_BS"/>
</dbReference>
<dbReference type="InterPro" id="IPR039429">
    <property type="entry name" value="SHMT-like_dom"/>
</dbReference>
<dbReference type="NCBIfam" id="NF000586">
    <property type="entry name" value="PRK00011.1"/>
    <property type="match status" value="1"/>
</dbReference>
<dbReference type="PANTHER" id="PTHR11680">
    <property type="entry name" value="SERINE HYDROXYMETHYLTRANSFERASE"/>
    <property type="match status" value="1"/>
</dbReference>
<dbReference type="PANTHER" id="PTHR11680:SF50">
    <property type="entry name" value="SERINE HYDROXYMETHYLTRANSFERASE"/>
    <property type="match status" value="1"/>
</dbReference>
<dbReference type="Pfam" id="PF00464">
    <property type="entry name" value="SHMT"/>
    <property type="match status" value="1"/>
</dbReference>
<dbReference type="PIRSF" id="PIRSF000412">
    <property type="entry name" value="SHMT"/>
    <property type="match status" value="1"/>
</dbReference>
<dbReference type="SUPFAM" id="SSF53383">
    <property type="entry name" value="PLP-dependent transferases"/>
    <property type="match status" value="1"/>
</dbReference>
<dbReference type="PROSITE" id="PS00096">
    <property type="entry name" value="SHMT"/>
    <property type="match status" value="1"/>
</dbReference>
<sequence>MLKREMNIADYDAELWQAMEQEKVRQEEHIELIASENYTSPRVMQAQGSQLTNKYAEGYPGKRYYGGCEYVDIVEQLAIDRAKELFGADYANVQPHSGSQANFAVYTALLEPGDTVLGMNLAHGGHLTHGSPVNFSGKLYNIVPYGIDATGHIDYADLEKQAKEHKPKMIIGGFSAYSGVVDWAKMREIADSIGAYLFVDMAHVAGLVAAGVYPNPVPHAHVVTTTTHKTLAGPRGGLILAKGGSEELYKKLNSAVFPGGQGGPLMHVIAGKAVALKEAMEPEFKTYQQQVAKNAKAMVEVFLERGYKVVSGGTDNHLFLVDLVDKNLTGKEADAALGRANITVNKNSVPNDPKSPFVTSGIRVGTPAITRRGFKEAEAKELAGWMCDVLDSINDEAVIERIKGKVLDICARYPVYA</sequence>
<protein>
    <recommendedName>
        <fullName evidence="1">Serine hydroxymethyltransferase</fullName>
        <shortName evidence="1">SHMT</shortName>
        <shortName evidence="1">Serine methylase</shortName>
        <ecNumber evidence="1">2.1.2.1</ecNumber>
    </recommendedName>
</protein>
<feature type="chain" id="PRO_1000091579" description="Serine hydroxymethyltransferase">
    <location>
        <begin position="1"/>
        <end position="417"/>
    </location>
</feature>
<feature type="binding site" evidence="1">
    <location>
        <position position="121"/>
    </location>
    <ligand>
        <name>(6S)-5,6,7,8-tetrahydrofolate</name>
        <dbReference type="ChEBI" id="CHEBI:57453"/>
    </ligand>
</feature>
<feature type="binding site" evidence="1">
    <location>
        <begin position="125"/>
        <end position="127"/>
    </location>
    <ligand>
        <name>(6S)-5,6,7,8-tetrahydrofolate</name>
        <dbReference type="ChEBI" id="CHEBI:57453"/>
    </ligand>
</feature>
<feature type="binding site" evidence="1">
    <location>
        <begin position="355"/>
        <end position="357"/>
    </location>
    <ligand>
        <name>(6S)-5,6,7,8-tetrahydrofolate</name>
        <dbReference type="ChEBI" id="CHEBI:57453"/>
    </ligand>
</feature>
<feature type="site" description="Plays an important role in substrate specificity" evidence="1">
    <location>
        <position position="228"/>
    </location>
</feature>
<feature type="modified residue" description="N6-acetyllysine" evidence="1">
    <location>
        <position position="54"/>
    </location>
</feature>
<feature type="modified residue" description="N6-(pyridoxal phosphate)lysine" evidence="1">
    <location>
        <position position="229"/>
    </location>
</feature>
<feature type="modified residue" description="N6-acetyllysine" evidence="1">
    <location>
        <position position="250"/>
    </location>
</feature>
<feature type="modified residue" description="N6-acetyllysine" evidence="1">
    <location>
        <position position="285"/>
    </location>
</feature>
<feature type="modified residue" description="N6-acetyllysine" evidence="1">
    <location>
        <position position="354"/>
    </location>
</feature>
<feature type="modified residue" description="N6-acetyllysine" evidence="1">
    <location>
        <position position="375"/>
    </location>
</feature>
<accession>B2TXW4</accession>